<reference key="1">
    <citation type="journal article" date="2006" name="Proc. Natl. Acad. Sci. U.S.A.">
        <title>Genomic analysis of the uncultivated marine crenarchaeote Cenarchaeum symbiosum.</title>
        <authorList>
            <person name="Hallam S.J."/>
            <person name="Konstantinidis K.T."/>
            <person name="Putnam N."/>
            <person name="Schleper C."/>
            <person name="Watanabe Y."/>
            <person name="Sugahara J."/>
            <person name="Preston C."/>
            <person name="de la Torre J."/>
            <person name="Richardson P.M."/>
            <person name="DeLong E.F."/>
        </authorList>
    </citation>
    <scope>NUCLEOTIDE SEQUENCE [LARGE SCALE GENOMIC DNA]</scope>
    <source>
        <strain>A</strain>
    </source>
</reference>
<feature type="chain" id="PRO_1000204179" description="Anthranilate phosphoribosyltransferase">
    <location>
        <begin position="1"/>
        <end position="343"/>
    </location>
</feature>
<feature type="binding site" evidence="1">
    <location>
        <position position="77"/>
    </location>
    <ligand>
        <name>5-phospho-alpha-D-ribose 1-diphosphate</name>
        <dbReference type="ChEBI" id="CHEBI:58017"/>
    </ligand>
</feature>
<feature type="binding site" evidence="1">
    <location>
        <position position="77"/>
    </location>
    <ligand>
        <name>anthranilate</name>
        <dbReference type="ChEBI" id="CHEBI:16567"/>
        <label>1</label>
    </ligand>
</feature>
<feature type="binding site" evidence="1">
    <location>
        <begin position="80"/>
        <end position="81"/>
    </location>
    <ligand>
        <name>5-phospho-alpha-D-ribose 1-diphosphate</name>
        <dbReference type="ChEBI" id="CHEBI:58017"/>
    </ligand>
</feature>
<feature type="binding site" evidence="1">
    <location>
        <position position="85"/>
    </location>
    <ligand>
        <name>5-phospho-alpha-D-ribose 1-diphosphate</name>
        <dbReference type="ChEBI" id="CHEBI:58017"/>
    </ligand>
</feature>
<feature type="binding site" evidence="1">
    <location>
        <begin position="87"/>
        <end position="90"/>
    </location>
    <ligand>
        <name>5-phospho-alpha-D-ribose 1-diphosphate</name>
        <dbReference type="ChEBI" id="CHEBI:58017"/>
    </ligand>
</feature>
<feature type="binding site" evidence="1">
    <location>
        <position position="89"/>
    </location>
    <ligand>
        <name>Mg(2+)</name>
        <dbReference type="ChEBI" id="CHEBI:18420"/>
        <label>1</label>
    </ligand>
</feature>
<feature type="binding site" evidence="1">
    <location>
        <begin position="105"/>
        <end position="113"/>
    </location>
    <ligand>
        <name>5-phospho-alpha-D-ribose 1-diphosphate</name>
        <dbReference type="ChEBI" id="CHEBI:58017"/>
    </ligand>
</feature>
<feature type="binding site" evidence="1">
    <location>
        <position position="108"/>
    </location>
    <ligand>
        <name>anthranilate</name>
        <dbReference type="ChEBI" id="CHEBI:16567"/>
        <label>1</label>
    </ligand>
</feature>
<feature type="binding site" evidence="1">
    <location>
        <position position="117"/>
    </location>
    <ligand>
        <name>5-phospho-alpha-D-ribose 1-diphosphate</name>
        <dbReference type="ChEBI" id="CHEBI:58017"/>
    </ligand>
</feature>
<feature type="binding site" evidence="1">
    <location>
        <position position="163"/>
    </location>
    <ligand>
        <name>anthranilate</name>
        <dbReference type="ChEBI" id="CHEBI:16567"/>
        <label>2</label>
    </ligand>
</feature>
<feature type="binding site" evidence="1">
    <location>
        <position position="222"/>
    </location>
    <ligand>
        <name>Mg(2+)</name>
        <dbReference type="ChEBI" id="CHEBI:18420"/>
        <label>2</label>
    </ligand>
</feature>
<feature type="binding site" evidence="1">
    <location>
        <position position="223"/>
    </location>
    <ligand>
        <name>Mg(2+)</name>
        <dbReference type="ChEBI" id="CHEBI:18420"/>
        <label>1</label>
    </ligand>
</feature>
<feature type="binding site" evidence="1">
    <location>
        <position position="223"/>
    </location>
    <ligand>
        <name>Mg(2+)</name>
        <dbReference type="ChEBI" id="CHEBI:18420"/>
        <label>2</label>
    </ligand>
</feature>
<keyword id="KW-0028">Amino-acid biosynthesis</keyword>
<keyword id="KW-0057">Aromatic amino acid biosynthesis</keyword>
<keyword id="KW-0328">Glycosyltransferase</keyword>
<keyword id="KW-0460">Magnesium</keyword>
<keyword id="KW-0479">Metal-binding</keyword>
<keyword id="KW-1185">Reference proteome</keyword>
<keyword id="KW-0808">Transferase</keyword>
<keyword id="KW-0822">Tryptophan biosynthesis</keyword>
<sequence length="343" mass="35287">MAAEKLRRGEDLTLEEAHDAASGMLGGMGTDESAELLSLLARKGETDEELLGVLEAVSEHSERVVPRNSGTVIDVCGTGGDGMSTLNVSTACAFVAAASGCTVAKHGNRSSSGCSGSADIFERLGCDLDQRPGDAASLLEDLNICFMYAPRYHPALAGIADARKKVGGRTVFNLVGPLCNPAGVRDQLVGVSSQDLLGRIPRILHRRGAGSAMAVMSDDGMDELSTSSHGSACILRGGEVYTERVDPEALGLHASSANELRIHSAGGAFHSFVAVLDGRAGRAMAETVELNAAAALVVGGISEGLADGIEAARVAIEGGAASDLLDRFVAKAGDPGMLREARE</sequence>
<accession>A0RX34</accession>
<dbReference type="EC" id="2.4.2.18" evidence="1"/>
<dbReference type="EMBL" id="DP000238">
    <property type="protein sequence ID" value="ABK77901.1"/>
    <property type="molecule type" value="Genomic_DNA"/>
</dbReference>
<dbReference type="SMR" id="A0RX34"/>
<dbReference type="STRING" id="414004.CENSYa_1278"/>
<dbReference type="EnsemblBacteria" id="ABK77901">
    <property type="protein sequence ID" value="ABK77901"/>
    <property type="gene ID" value="CENSYa_1278"/>
</dbReference>
<dbReference type="KEGG" id="csy:CENSYa_1278"/>
<dbReference type="PATRIC" id="fig|414004.10.peg.1164"/>
<dbReference type="HOGENOM" id="CLU_034315_2_1_2"/>
<dbReference type="UniPathway" id="UPA00035">
    <property type="reaction ID" value="UER00041"/>
</dbReference>
<dbReference type="Proteomes" id="UP000000758">
    <property type="component" value="Chromosome"/>
</dbReference>
<dbReference type="GO" id="GO:0005829">
    <property type="term" value="C:cytosol"/>
    <property type="evidence" value="ECO:0007669"/>
    <property type="project" value="TreeGrafter"/>
</dbReference>
<dbReference type="GO" id="GO:0004048">
    <property type="term" value="F:anthranilate phosphoribosyltransferase activity"/>
    <property type="evidence" value="ECO:0007669"/>
    <property type="project" value="UniProtKB-UniRule"/>
</dbReference>
<dbReference type="GO" id="GO:0000287">
    <property type="term" value="F:magnesium ion binding"/>
    <property type="evidence" value="ECO:0007669"/>
    <property type="project" value="UniProtKB-UniRule"/>
</dbReference>
<dbReference type="GO" id="GO:0000162">
    <property type="term" value="P:L-tryptophan biosynthetic process"/>
    <property type="evidence" value="ECO:0007669"/>
    <property type="project" value="UniProtKB-UniRule"/>
</dbReference>
<dbReference type="Gene3D" id="3.40.1030.10">
    <property type="entry name" value="Nucleoside phosphorylase/phosphoribosyltransferase catalytic domain"/>
    <property type="match status" value="1"/>
</dbReference>
<dbReference type="Gene3D" id="1.20.970.10">
    <property type="entry name" value="Transferase, Pyrimidine Nucleoside Phosphorylase, Chain C"/>
    <property type="match status" value="1"/>
</dbReference>
<dbReference type="HAMAP" id="MF_00211">
    <property type="entry name" value="TrpD"/>
    <property type="match status" value="1"/>
</dbReference>
<dbReference type="InterPro" id="IPR005940">
    <property type="entry name" value="Anthranilate_Pribosyl_Tfrase"/>
</dbReference>
<dbReference type="InterPro" id="IPR000312">
    <property type="entry name" value="Glycosyl_Trfase_fam3"/>
</dbReference>
<dbReference type="InterPro" id="IPR017459">
    <property type="entry name" value="Glycosyl_Trfase_fam3_N_dom"/>
</dbReference>
<dbReference type="InterPro" id="IPR036320">
    <property type="entry name" value="Glycosyl_Trfase_fam3_N_dom_sf"/>
</dbReference>
<dbReference type="InterPro" id="IPR035902">
    <property type="entry name" value="Nuc_phospho_transferase"/>
</dbReference>
<dbReference type="NCBIfam" id="TIGR01245">
    <property type="entry name" value="trpD"/>
    <property type="match status" value="1"/>
</dbReference>
<dbReference type="PANTHER" id="PTHR43285">
    <property type="entry name" value="ANTHRANILATE PHOSPHORIBOSYLTRANSFERASE"/>
    <property type="match status" value="1"/>
</dbReference>
<dbReference type="PANTHER" id="PTHR43285:SF2">
    <property type="entry name" value="ANTHRANILATE PHOSPHORIBOSYLTRANSFERASE"/>
    <property type="match status" value="1"/>
</dbReference>
<dbReference type="Pfam" id="PF02885">
    <property type="entry name" value="Glycos_trans_3N"/>
    <property type="match status" value="1"/>
</dbReference>
<dbReference type="Pfam" id="PF00591">
    <property type="entry name" value="Glycos_transf_3"/>
    <property type="match status" value="1"/>
</dbReference>
<dbReference type="SUPFAM" id="SSF52418">
    <property type="entry name" value="Nucleoside phosphorylase/phosphoribosyltransferase catalytic domain"/>
    <property type="match status" value="1"/>
</dbReference>
<dbReference type="SUPFAM" id="SSF47648">
    <property type="entry name" value="Nucleoside phosphorylase/phosphoribosyltransferase N-terminal domain"/>
    <property type="match status" value="1"/>
</dbReference>
<name>TRPD_CENSY</name>
<comment type="function">
    <text evidence="1">Catalyzes the transfer of the phosphoribosyl group of 5-phosphorylribose-1-pyrophosphate (PRPP) to anthranilate to yield N-(5'-phosphoribosyl)-anthranilate (PRA).</text>
</comment>
<comment type="catalytic activity">
    <reaction evidence="1">
        <text>N-(5-phospho-beta-D-ribosyl)anthranilate + diphosphate = 5-phospho-alpha-D-ribose 1-diphosphate + anthranilate</text>
        <dbReference type="Rhea" id="RHEA:11768"/>
        <dbReference type="ChEBI" id="CHEBI:16567"/>
        <dbReference type="ChEBI" id="CHEBI:18277"/>
        <dbReference type="ChEBI" id="CHEBI:33019"/>
        <dbReference type="ChEBI" id="CHEBI:58017"/>
        <dbReference type="EC" id="2.4.2.18"/>
    </reaction>
</comment>
<comment type="cofactor">
    <cofactor evidence="1">
        <name>Mg(2+)</name>
        <dbReference type="ChEBI" id="CHEBI:18420"/>
    </cofactor>
    <text evidence="1">Binds 2 magnesium ions per monomer.</text>
</comment>
<comment type="pathway">
    <text evidence="1">Amino-acid biosynthesis; L-tryptophan biosynthesis; L-tryptophan from chorismate: step 2/5.</text>
</comment>
<comment type="subunit">
    <text evidence="1">Homodimer.</text>
</comment>
<comment type="similarity">
    <text evidence="1">Belongs to the anthranilate phosphoribosyltransferase family.</text>
</comment>
<protein>
    <recommendedName>
        <fullName evidence="1">Anthranilate phosphoribosyltransferase</fullName>
        <ecNumber evidence="1">2.4.2.18</ecNumber>
    </recommendedName>
</protein>
<gene>
    <name evidence="1" type="primary">trpD</name>
    <name type="ordered locus">CENSYa_1278</name>
</gene>
<evidence type="ECO:0000255" key="1">
    <source>
        <dbReference type="HAMAP-Rule" id="MF_00211"/>
    </source>
</evidence>
<organism>
    <name type="scientific">Cenarchaeum symbiosum (strain A)</name>
    <dbReference type="NCBI Taxonomy" id="414004"/>
    <lineage>
        <taxon>Archaea</taxon>
        <taxon>Nitrososphaerota</taxon>
        <taxon>Candidatus Cenarchaeales</taxon>
        <taxon>Candidatus Cenarchaeaceae</taxon>
        <taxon>Candidatus Cenarchaeum</taxon>
    </lineage>
</organism>
<proteinExistence type="inferred from homology"/>